<proteinExistence type="inferred from homology"/>
<reference key="1">
    <citation type="journal article" date="2003" name="Nat. Biotechnol.">
        <title>The genome sequence of the entomopathogenic bacterium Photorhabdus luminescens.</title>
        <authorList>
            <person name="Duchaud E."/>
            <person name="Rusniok C."/>
            <person name="Frangeul L."/>
            <person name="Buchrieser C."/>
            <person name="Givaudan A."/>
            <person name="Taourit S."/>
            <person name="Bocs S."/>
            <person name="Boursaux-Eude C."/>
            <person name="Chandler M."/>
            <person name="Charles J.-F."/>
            <person name="Dassa E."/>
            <person name="Derose R."/>
            <person name="Derzelle S."/>
            <person name="Freyssinet G."/>
            <person name="Gaudriault S."/>
            <person name="Medigue C."/>
            <person name="Lanois A."/>
            <person name="Powell K."/>
            <person name="Siguier P."/>
            <person name="Vincent R."/>
            <person name="Wingate V."/>
            <person name="Zouine M."/>
            <person name="Glaser P."/>
            <person name="Boemare N."/>
            <person name="Danchin A."/>
            <person name="Kunst F."/>
        </authorList>
    </citation>
    <scope>NUCLEOTIDE SEQUENCE [LARGE SCALE GENOMIC DNA]</scope>
    <source>
        <strain>DSM 15139 / CIP 105565 / TT01</strain>
    </source>
</reference>
<gene>
    <name evidence="1" type="primary">pdxJ</name>
    <name type="ordered locus">plu3337</name>
</gene>
<organism>
    <name type="scientific">Photorhabdus laumondii subsp. laumondii (strain DSM 15139 / CIP 105565 / TT01)</name>
    <name type="common">Photorhabdus luminescens subsp. laumondii</name>
    <dbReference type="NCBI Taxonomy" id="243265"/>
    <lineage>
        <taxon>Bacteria</taxon>
        <taxon>Pseudomonadati</taxon>
        <taxon>Pseudomonadota</taxon>
        <taxon>Gammaproteobacteria</taxon>
        <taxon>Enterobacterales</taxon>
        <taxon>Morganellaceae</taxon>
        <taxon>Photorhabdus</taxon>
    </lineage>
</organism>
<protein>
    <recommendedName>
        <fullName evidence="1">Pyridoxine 5'-phosphate synthase</fullName>
        <shortName evidence="1">PNP synthase</shortName>
        <ecNumber evidence="1">2.6.99.2</ecNumber>
    </recommendedName>
</protein>
<keyword id="KW-0963">Cytoplasm</keyword>
<keyword id="KW-0664">Pyridoxine biosynthesis</keyword>
<keyword id="KW-1185">Reference proteome</keyword>
<keyword id="KW-0808">Transferase</keyword>
<accession>Q7N1X8</accession>
<feature type="chain" id="PRO_0000231827" description="Pyridoxine 5'-phosphate synthase">
    <location>
        <begin position="1"/>
        <end position="243"/>
    </location>
</feature>
<feature type="active site" description="Proton acceptor" evidence="1">
    <location>
        <position position="45"/>
    </location>
</feature>
<feature type="active site" description="Proton acceptor" evidence="1">
    <location>
        <position position="72"/>
    </location>
</feature>
<feature type="active site" description="Proton donor" evidence="1">
    <location>
        <position position="193"/>
    </location>
</feature>
<feature type="binding site" evidence="1">
    <location>
        <position position="9"/>
    </location>
    <ligand>
        <name>3-amino-2-oxopropyl phosphate</name>
        <dbReference type="ChEBI" id="CHEBI:57279"/>
    </ligand>
</feature>
<feature type="binding site" evidence="1">
    <location>
        <begin position="11"/>
        <end position="12"/>
    </location>
    <ligand>
        <name>1-deoxy-D-xylulose 5-phosphate</name>
        <dbReference type="ChEBI" id="CHEBI:57792"/>
    </ligand>
</feature>
<feature type="binding site" evidence="1">
    <location>
        <position position="20"/>
    </location>
    <ligand>
        <name>3-amino-2-oxopropyl phosphate</name>
        <dbReference type="ChEBI" id="CHEBI:57279"/>
    </ligand>
</feature>
<feature type="binding site" evidence="1">
    <location>
        <position position="47"/>
    </location>
    <ligand>
        <name>1-deoxy-D-xylulose 5-phosphate</name>
        <dbReference type="ChEBI" id="CHEBI:57792"/>
    </ligand>
</feature>
<feature type="binding site" evidence="1">
    <location>
        <position position="52"/>
    </location>
    <ligand>
        <name>1-deoxy-D-xylulose 5-phosphate</name>
        <dbReference type="ChEBI" id="CHEBI:57792"/>
    </ligand>
</feature>
<feature type="binding site" evidence="1">
    <location>
        <position position="102"/>
    </location>
    <ligand>
        <name>1-deoxy-D-xylulose 5-phosphate</name>
        <dbReference type="ChEBI" id="CHEBI:57792"/>
    </ligand>
</feature>
<feature type="binding site" evidence="1">
    <location>
        <position position="194"/>
    </location>
    <ligand>
        <name>3-amino-2-oxopropyl phosphate</name>
        <dbReference type="ChEBI" id="CHEBI:57279"/>
    </ligand>
</feature>
<feature type="binding site" evidence="1">
    <location>
        <begin position="215"/>
        <end position="216"/>
    </location>
    <ligand>
        <name>3-amino-2-oxopropyl phosphate</name>
        <dbReference type="ChEBI" id="CHEBI:57279"/>
    </ligand>
</feature>
<feature type="site" description="Transition state stabilizer" evidence="1">
    <location>
        <position position="153"/>
    </location>
</feature>
<evidence type="ECO:0000255" key="1">
    <source>
        <dbReference type="HAMAP-Rule" id="MF_00279"/>
    </source>
</evidence>
<sequence>MAEVLLGVNIDHIATVRNARGTHYPDPVQAAFVAEQAGADGITIHLREDRRHITDRDVELLKKTIQTRMNLEMAVTDEMVDIACRIKPEFCCLVPEKRQEVTTEGGLDVIGQKDKVAAAVKRLSDAGILVSLFIDAEHRQIDAANEVGAPFIEIHTGAYADAKNEVEQEKEFHRIKAAATYAASKGLTVNAGHGLTYHNVQRIAALPEIYELNIGHAIIGRAVFSGLTAAVADMKTQMRKARR</sequence>
<comment type="function">
    <text evidence="1">Catalyzes the complicated ring closure reaction between the two acyclic compounds 1-deoxy-D-xylulose-5-phosphate (DXP) and 3-amino-2-oxopropyl phosphate (1-amino-acetone-3-phosphate or AAP) to form pyridoxine 5'-phosphate (PNP) and inorganic phosphate.</text>
</comment>
<comment type="catalytic activity">
    <reaction evidence="1">
        <text>3-amino-2-oxopropyl phosphate + 1-deoxy-D-xylulose 5-phosphate = pyridoxine 5'-phosphate + phosphate + 2 H2O + H(+)</text>
        <dbReference type="Rhea" id="RHEA:15265"/>
        <dbReference type="ChEBI" id="CHEBI:15377"/>
        <dbReference type="ChEBI" id="CHEBI:15378"/>
        <dbReference type="ChEBI" id="CHEBI:43474"/>
        <dbReference type="ChEBI" id="CHEBI:57279"/>
        <dbReference type="ChEBI" id="CHEBI:57792"/>
        <dbReference type="ChEBI" id="CHEBI:58589"/>
        <dbReference type="EC" id="2.6.99.2"/>
    </reaction>
</comment>
<comment type="pathway">
    <text evidence="1">Cofactor biosynthesis; pyridoxine 5'-phosphate biosynthesis; pyridoxine 5'-phosphate from D-erythrose 4-phosphate: step 5/5.</text>
</comment>
<comment type="subunit">
    <text evidence="1">Homooctamer; tetramer of dimers.</text>
</comment>
<comment type="subcellular location">
    <subcellularLocation>
        <location evidence="1">Cytoplasm</location>
    </subcellularLocation>
</comment>
<comment type="similarity">
    <text evidence="1">Belongs to the PNP synthase family.</text>
</comment>
<name>PDXJ_PHOLL</name>
<dbReference type="EC" id="2.6.99.2" evidence="1"/>
<dbReference type="EMBL" id="BX571870">
    <property type="protein sequence ID" value="CAE15711.1"/>
    <property type="molecule type" value="Genomic_DNA"/>
</dbReference>
<dbReference type="RefSeq" id="WP_011147525.1">
    <property type="nucleotide sequence ID" value="NC_005126.1"/>
</dbReference>
<dbReference type="SMR" id="Q7N1X8"/>
<dbReference type="STRING" id="243265.plu3337"/>
<dbReference type="GeneID" id="48849590"/>
<dbReference type="KEGG" id="plu:plu3337"/>
<dbReference type="eggNOG" id="COG0854">
    <property type="taxonomic scope" value="Bacteria"/>
</dbReference>
<dbReference type="HOGENOM" id="CLU_074563_0_0_6"/>
<dbReference type="OrthoDB" id="9806590at2"/>
<dbReference type="UniPathway" id="UPA00244">
    <property type="reaction ID" value="UER00313"/>
</dbReference>
<dbReference type="Proteomes" id="UP000002514">
    <property type="component" value="Chromosome"/>
</dbReference>
<dbReference type="GO" id="GO:0005829">
    <property type="term" value="C:cytosol"/>
    <property type="evidence" value="ECO:0007669"/>
    <property type="project" value="TreeGrafter"/>
</dbReference>
<dbReference type="GO" id="GO:0033856">
    <property type="term" value="F:pyridoxine 5'-phosphate synthase activity"/>
    <property type="evidence" value="ECO:0007669"/>
    <property type="project" value="UniProtKB-EC"/>
</dbReference>
<dbReference type="GO" id="GO:0008615">
    <property type="term" value="P:pyridoxine biosynthetic process"/>
    <property type="evidence" value="ECO:0007669"/>
    <property type="project" value="UniProtKB-UniRule"/>
</dbReference>
<dbReference type="CDD" id="cd00003">
    <property type="entry name" value="PNPsynthase"/>
    <property type="match status" value="1"/>
</dbReference>
<dbReference type="FunFam" id="3.20.20.70:FF:000042">
    <property type="entry name" value="Pyridoxine 5'-phosphate synthase"/>
    <property type="match status" value="1"/>
</dbReference>
<dbReference type="Gene3D" id="3.20.20.70">
    <property type="entry name" value="Aldolase class I"/>
    <property type="match status" value="1"/>
</dbReference>
<dbReference type="HAMAP" id="MF_00279">
    <property type="entry name" value="PdxJ"/>
    <property type="match status" value="1"/>
</dbReference>
<dbReference type="InterPro" id="IPR013785">
    <property type="entry name" value="Aldolase_TIM"/>
</dbReference>
<dbReference type="InterPro" id="IPR004569">
    <property type="entry name" value="PyrdxlP_synth_PdxJ"/>
</dbReference>
<dbReference type="InterPro" id="IPR036130">
    <property type="entry name" value="Pyridoxine-5'_phos_synth"/>
</dbReference>
<dbReference type="NCBIfam" id="TIGR00559">
    <property type="entry name" value="pdxJ"/>
    <property type="match status" value="1"/>
</dbReference>
<dbReference type="NCBIfam" id="NF003623">
    <property type="entry name" value="PRK05265.1-1"/>
    <property type="match status" value="1"/>
</dbReference>
<dbReference type="NCBIfam" id="NF003624">
    <property type="entry name" value="PRK05265.1-2"/>
    <property type="match status" value="1"/>
</dbReference>
<dbReference type="NCBIfam" id="NF003625">
    <property type="entry name" value="PRK05265.1-3"/>
    <property type="match status" value="1"/>
</dbReference>
<dbReference type="NCBIfam" id="NF003627">
    <property type="entry name" value="PRK05265.1-5"/>
    <property type="match status" value="1"/>
</dbReference>
<dbReference type="PANTHER" id="PTHR30456">
    <property type="entry name" value="PYRIDOXINE 5'-PHOSPHATE SYNTHASE"/>
    <property type="match status" value="1"/>
</dbReference>
<dbReference type="PANTHER" id="PTHR30456:SF0">
    <property type="entry name" value="PYRIDOXINE 5'-PHOSPHATE SYNTHASE"/>
    <property type="match status" value="1"/>
</dbReference>
<dbReference type="Pfam" id="PF03740">
    <property type="entry name" value="PdxJ"/>
    <property type="match status" value="1"/>
</dbReference>
<dbReference type="SUPFAM" id="SSF63892">
    <property type="entry name" value="Pyridoxine 5'-phosphate synthase"/>
    <property type="match status" value="1"/>
</dbReference>